<sequence>MAKVYYDEDASLEVLKGKTVAIIGYGSQGHAHALNLRDSGVNVIIGLYSGSRSAEKAKAEGFEVLIPDEAAKKADIIMMLIPDTIQPEVYETAILPNLDEGNALAFAHGFNIHFNQIVPPEYVDVFLVAPKGPGHLVRWQYEEGKGVPGLVAVHQDFTGQAKDIALAYAKGVGCTRAGLIETTFKEETETDLFGEQAVLCGGATALIKAGFETLVEAGYQPEVAYFECLHELKLIVDLIYQYGISGMRYSISDTARYGDVTRGDRIYEAVKPIHKKILDEIQRGEFAKEWVLENIARRPHFDALVKRDEEHPVEKVGKELRKMMPWLEGKGL</sequence>
<protein>
    <recommendedName>
        <fullName evidence="1">Ketol-acid reductoisomerase (NADP(+))</fullName>
        <shortName evidence="1">KARI</shortName>
        <ecNumber evidence="1">1.1.1.86</ecNumber>
    </recommendedName>
    <alternativeName>
        <fullName evidence="1">Acetohydroxy-acid isomeroreductase</fullName>
        <shortName evidence="1">AHIR</shortName>
    </alternativeName>
    <alternativeName>
        <fullName evidence="1">Alpha-keto-beta-hydroxylacyl reductoisomerase</fullName>
    </alternativeName>
    <alternativeName>
        <fullName evidence="1">Ketol-acid reductoisomerase type 1</fullName>
    </alternativeName>
    <alternativeName>
        <fullName evidence="1">Ketol-acid reductoisomerase type I</fullName>
    </alternativeName>
</protein>
<proteinExistence type="inferred from homology"/>
<evidence type="ECO:0000255" key="1">
    <source>
        <dbReference type="HAMAP-Rule" id="MF_00435"/>
    </source>
</evidence>
<evidence type="ECO:0000255" key="2">
    <source>
        <dbReference type="PROSITE-ProRule" id="PRU01197"/>
    </source>
</evidence>
<evidence type="ECO:0000255" key="3">
    <source>
        <dbReference type="PROSITE-ProRule" id="PRU01198"/>
    </source>
</evidence>
<accession>C0QTD8</accession>
<feature type="chain" id="PRO_1000190979" description="Ketol-acid reductoisomerase (NADP(+))">
    <location>
        <begin position="1"/>
        <end position="332"/>
    </location>
</feature>
<feature type="domain" description="KARI N-terminal Rossmann" evidence="2">
    <location>
        <begin position="2"/>
        <end position="182"/>
    </location>
</feature>
<feature type="domain" description="KARI C-terminal knotted" evidence="3">
    <location>
        <begin position="183"/>
        <end position="327"/>
    </location>
</feature>
<feature type="active site" evidence="1">
    <location>
        <position position="108"/>
    </location>
</feature>
<feature type="binding site" evidence="1">
    <location>
        <begin position="25"/>
        <end position="28"/>
    </location>
    <ligand>
        <name>NADP(+)</name>
        <dbReference type="ChEBI" id="CHEBI:58349"/>
    </ligand>
</feature>
<feature type="binding site" evidence="1">
    <location>
        <position position="51"/>
    </location>
    <ligand>
        <name>NADP(+)</name>
        <dbReference type="ChEBI" id="CHEBI:58349"/>
    </ligand>
</feature>
<feature type="binding site" evidence="1">
    <location>
        <position position="53"/>
    </location>
    <ligand>
        <name>NADP(+)</name>
        <dbReference type="ChEBI" id="CHEBI:58349"/>
    </ligand>
</feature>
<feature type="binding site" evidence="1">
    <location>
        <begin position="83"/>
        <end position="86"/>
    </location>
    <ligand>
        <name>NADP(+)</name>
        <dbReference type="ChEBI" id="CHEBI:58349"/>
    </ligand>
</feature>
<feature type="binding site" evidence="1">
    <location>
        <position position="134"/>
    </location>
    <ligand>
        <name>NADP(+)</name>
        <dbReference type="ChEBI" id="CHEBI:58349"/>
    </ligand>
</feature>
<feature type="binding site" evidence="1">
    <location>
        <position position="191"/>
    </location>
    <ligand>
        <name>Mg(2+)</name>
        <dbReference type="ChEBI" id="CHEBI:18420"/>
        <label>1</label>
    </ligand>
</feature>
<feature type="binding site" evidence="1">
    <location>
        <position position="191"/>
    </location>
    <ligand>
        <name>Mg(2+)</name>
        <dbReference type="ChEBI" id="CHEBI:18420"/>
        <label>2</label>
    </ligand>
</feature>
<feature type="binding site" evidence="1">
    <location>
        <position position="195"/>
    </location>
    <ligand>
        <name>Mg(2+)</name>
        <dbReference type="ChEBI" id="CHEBI:18420"/>
        <label>1</label>
    </ligand>
</feature>
<feature type="binding site" evidence="1">
    <location>
        <position position="227"/>
    </location>
    <ligand>
        <name>Mg(2+)</name>
        <dbReference type="ChEBI" id="CHEBI:18420"/>
        <label>2</label>
    </ligand>
</feature>
<feature type="binding site" evidence="1">
    <location>
        <position position="231"/>
    </location>
    <ligand>
        <name>Mg(2+)</name>
        <dbReference type="ChEBI" id="CHEBI:18420"/>
        <label>2</label>
    </ligand>
</feature>
<feature type="binding site" evidence="1">
    <location>
        <position position="252"/>
    </location>
    <ligand>
        <name>substrate</name>
    </ligand>
</feature>
<comment type="function">
    <text evidence="1">Involved in the biosynthesis of branched-chain amino acids (BCAA). Catalyzes an alkyl-migration followed by a ketol-acid reduction of (S)-2-acetolactate (S2AL) to yield (R)-2,3-dihydroxy-isovalerate. In the isomerase reaction, S2AL is rearranged via a Mg-dependent methyl migration to produce 3-hydroxy-3-methyl-2-ketobutyrate (HMKB). In the reductase reaction, this 2-ketoacid undergoes a metal-dependent reduction by NADPH to yield (R)-2,3-dihydroxy-isovalerate.</text>
</comment>
<comment type="catalytic activity">
    <reaction evidence="1">
        <text>(2R)-2,3-dihydroxy-3-methylbutanoate + NADP(+) = (2S)-2-acetolactate + NADPH + H(+)</text>
        <dbReference type="Rhea" id="RHEA:22068"/>
        <dbReference type="ChEBI" id="CHEBI:15378"/>
        <dbReference type="ChEBI" id="CHEBI:49072"/>
        <dbReference type="ChEBI" id="CHEBI:57783"/>
        <dbReference type="ChEBI" id="CHEBI:58349"/>
        <dbReference type="ChEBI" id="CHEBI:58476"/>
        <dbReference type="EC" id="1.1.1.86"/>
    </reaction>
</comment>
<comment type="catalytic activity">
    <reaction evidence="1">
        <text>(2R,3R)-2,3-dihydroxy-3-methylpentanoate + NADP(+) = (S)-2-ethyl-2-hydroxy-3-oxobutanoate + NADPH + H(+)</text>
        <dbReference type="Rhea" id="RHEA:13493"/>
        <dbReference type="ChEBI" id="CHEBI:15378"/>
        <dbReference type="ChEBI" id="CHEBI:49256"/>
        <dbReference type="ChEBI" id="CHEBI:49258"/>
        <dbReference type="ChEBI" id="CHEBI:57783"/>
        <dbReference type="ChEBI" id="CHEBI:58349"/>
        <dbReference type="EC" id="1.1.1.86"/>
    </reaction>
</comment>
<comment type="cofactor">
    <cofactor evidence="1">
        <name>Mg(2+)</name>
        <dbReference type="ChEBI" id="CHEBI:18420"/>
    </cofactor>
    <text evidence="1">Binds 2 magnesium ions per subunit.</text>
</comment>
<comment type="pathway">
    <text evidence="1">Amino-acid biosynthesis; L-isoleucine biosynthesis; L-isoleucine from 2-oxobutanoate: step 2/4.</text>
</comment>
<comment type="pathway">
    <text evidence="1">Amino-acid biosynthesis; L-valine biosynthesis; L-valine from pyruvate: step 2/4.</text>
</comment>
<comment type="similarity">
    <text evidence="1">Belongs to the ketol-acid reductoisomerase family.</text>
</comment>
<keyword id="KW-0028">Amino-acid biosynthesis</keyword>
<keyword id="KW-0100">Branched-chain amino acid biosynthesis</keyword>
<keyword id="KW-0460">Magnesium</keyword>
<keyword id="KW-0479">Metal-binding</keyword>
<keyword id="KW-0521">NADP</keyword>
<keyword id="KW-0560">Oxidoreductase</keyword>
<keyword id="KW-1185">Reference proteome</keyword>
<dbReference type="EC" id="1.1.1.86" evidence="1"/>
<dbReference type="EMBL" id="CP001230">
    <property type="protein sequence ID" value="ACO03154.1"/>
    <property type="molecule type" value="Genomic_DNA"/>
</dbReference>
<dbReference type="RefSeq" id="WP_012675393.1">
    <property type="nucleotide sequence ID" value="NC_012440.1"/>
</dbReference>
<dbReference type="SMR" id="C0QTD8"/>
<dbReference type="STRING" id="123214.PERMA_0155"/>
<dbReference type="PaxDb" id="123214-PERMA_0155"/>
<dbReference type="KEGG" id="pmx:PERMA_0155"/>
<dbReference type="eggNOG" id="COG0059">
    <property type="taxonomic scope" value="Bacteria"/>
</dbReference>
<dbReference type="HOGENOM" id="CLU_033821_0_1_0"/>
<dbReference type="OrthoDB" id="9804088at2"/>
<dbReference type="UniPathway" id="UPA00047">
    <property type="reaction ID" value="UER00056"/>
</dbReference>
<dbReference type="UniPathway" id="UPA00049">
    <property type="reaction ID" value="UER00060"/>
</dbReference>
<dbReference type="Proteomes" id="UP000001366">
    <property type="component" value="Chromosome"/>
</dbReference>
<dbReference type="GO" id="GO:0005829">
    <property type="term" value="C:cytosol"/>
    <property type="evidence" value="ECO:0007669"/>
    <property type="project" value="TreeGrafter"/>
</dbReference>
<dbReference type="GO" id="GO:0004455">
    <property type="term" value="F:ketol-acid reductoisomerase activity"/>
    <property type="evidence" value="ECO:0007669"/>
    <property type="project" value="UniProtKB-UniRule"/>
</dbReference>
<dbReference type="GO" id="GO:0000287">
    <property type="term" value="F:magnesium ion binding"/>
    <property type="evidence" value="ECO:0007669"/>
    <property type="project" value="UniProtKB-UniRule"/>
</dbReference>
<dbReference type="GO" id="GO:0050661">
    <property type="term" value="F:NADP binding"/>
    <property type="evidence" value="ECO:0007669"/>
    <property type="project" value="InterPro"/>
</dbReference>
<dbReference type="GO" id="GO:0009097">
    <property type="term" value="P:isoleucine biosynthetic process"/>
    <property type="evidence" value="ECO:0007669"/>
    <property type="project" value="UniProtKB-UniRule"/>
</dbReference>
<dbReference type="GO" id="GO:0009099">
    <property type="term" value="P:L-valine biosynthetic process"/>
    <property type="evidence" value="ECO:0007669"/>
    <property type="project" value="UniProtKB-UniRule"/>
</dbReference>
<dbReference type="FunFam" id="3.40.50.720:FF:000023">
    <property type="entry name" value="Ketol-acid reductoisomerase (NADP(+))"/>
    <property type="match status" value="1"/>
</dbReference>
<dbReference type="Gene3D" id="6.10.240.10">
    <property type="match status" value="1"/>
</dbReference>
<dbReference type="Gene3D" id="3.40.50.720">
    <property type="entry name" value="NAD(P)-binding Rossmann-like Domain"/>
    <property type="match status" value="1"/>
</dbReference>
<dbReference type="HAMAP" id="MF_00435">
    <property type="entry name" value="IlvC"/>
    <property type="match status" value="1"/>
</dbReference>
<dbReference type="InterPro" id="IPR008927">
    <property type="entry name" value="6-PGluconate_DH-like_C_sf"/>
</dbReference>
<dbReference type="InterPro" id="IPR013023">
    <property type="entry name" value="KARI"/>
</dbReference>
<dbReference type="InterPro" id="IPR000506">
    <property type="entry name" value="KARI_C"/>
</dbReference>
<dbReference type="InterPro" id="IPR013116">
    <property type="entry name" value="KARI_N"/>
</dbReference>
<dbReference type="InterPro" id="IPR014359">
    <property type="entry name" value="KARI_prok"/>
</dbReference>
<dbReference type="InterPro" id="IPR036291">
    <property type="entry name" value="NAD(P)-bd_dom_sf"/>
</dbReference>
<dbReference type="NCBIfam" id="TIGR00465">
    <property type="entry name" value="ilvC"/>
    <property type="match status" value="1"/>
</dbReference>
<dbReference type="NCBIfam" id="NF004017">
    <property type="entry name" value="PRK05479.1"/>
    <property type="match status" value="1"/>
</dbReference>
<dbReference type="NCBIfam" id="NF009940">
    <property type="entry name" value="PRK13403.1"/>
    <property type="match status" value="1"/>
</dbReference>
<dbReference type="PANTHER" id="PTHR21371">
    <property type="entry name" value="KETOL-ACID REDUCTOISOMERASE, MITOCHONDRIAL"/>
    <property type="match status" value="1"/>
</dbReference>
<dbReference type="PANTHER" id="PTHR21371:SF1">
    <property type="entry name" value="KETOL-ACID REDUCTOISOMERASE, MITOCHONDRIAL"/>
    <property type="match status" value="1"/>
</dbReference>
<dbReference type="Pfam" id="PF01450">
    <property type="entry name" value="KARI_C"/>
    <property type="match status" value="1"/>
</dbReference>
<dbReference type="Pfam" id="PF07991">
    <property type="entry name" value="KARI_N"/>
    <property type="match status" value="1"/>
</dbReference>
<dbReference type="PIRSF" id="PIRSF000116">
    <property type="entry name" value="IlvC_gammaproteo"/>
    <property type="match status" value="1"/>
</dbReference>
<dbReference type="SUPFAM" id="SSF48179">
    <property type="entry name" value="6-phosphogluconate dehydrogenase C-terminal domain-like"/>
    <property type="match status" value="1"/>
</dbReference>
<dbReference type="SUPFAM" id="SSF51735">
    <property type="entry name" value="NAD(P)-binding Rossmann-fold domains"/>
    <property type="match status" value="1"/>
</dbReference>
<dbReference type="PROSITE" id="PS51851">
    <property type="entry name" value="KARI_C"/>
    <property type="match status" value="1"/>
</dbReference>
<dbReference type="PROSITE" id="PS51850">
    <property type="entry name" value="KARI_N"/>
    <property type="match status" value="1"/>
</dbReference>
<reference key="1">
    <citation type="journal article" date="2009" name="J. Bacteriol.">
        <title>Complete and draft genome sequences of six members of the Aquificales.</title>
        <authorList>
            <person name="Reysenbach A.-L."/>
            <person name="Hamamura N."/>
            <person name="Podar M."/>
            <person name="Griffiths E."/>
            <person name="Ferreira S."/>
            <person name="Hochstein R."/>
            <person name="Heidelberg J."/>
            <person name="Johnson J."/>
            <person name="Mead D."/>
            <person name="Pohorille A."/>
            <person name="Sarmiento M."/>
            <person name="Schweighofer K."/>
            <person name="Seshadri R."/>
            <person name="Voytek M.A."/>
        </authorList>
    </citation>
    <scope>NUCLEOTIDE SEQUENCE [LARGE SCALE GENOMIC DNA]</scope>
    <source>
        <strain>DSM 14350 / EX-H1</strain>
    </source>
</reference>
<gene>
    <name evidence="1" type="primary">ilvC</name>
    <name type="ordered locus">PERMA_0155</name>
</gene>
<organism>
    <name type="scientific">Persephonella marina (strain DSM 14350 / EX-H1)</name>
    <dbReference type="NCBI Taxonomy" id="123214"/>
    <lineage>
        <taxon>Bacteria</taxon>
        <taxon>Pseudomonadati</taxon>
        <taxon>Aquificota</taxon>
        <taxon>Aquificia</taxon>
        <taxon>Aquificales</taxon>
        <taxon>Hydrogenothermaceae</taxon>
        <taxon>Persephonella</taxon>
    </lineage>
</organism>
<name>ILVC_PERMH</name>